<organism>
    <name type="scientific">Conus pulicarius</name>
    <name type="common">Flea-bitten cone</name>
    <dbReference type="NCBI Taxonomy" id="93154"/>
    <lineage>
        <taxon>Eukaryota</taxon>
        <taxon>Metazoa</taxon>
        <taxon>Spiralia</taxon>
        <taxon>Lophotrochozoa</taxon>
        <taxon>Mollusca</taxon>
        <taxon>Gastropoda</taxon>
        <taxon>Caenogastropoda</taxon>
        <taxon>Neogastropoda</taxon>
        <taxon>Conoidea</taxon>
        <taxon>Conidae</taxon>
        <taxon>Conus</taxon>
    </lineage>
</organism>
<evidence type="ECO:0000250" key="1"/>
<evidence type="ECO:0000255" key="2"/>
<evidence type="ECO:0000303" key="3">
    <source>
    </source>
</evidence>
<evidence type="ECO:0000305" key="4"/>
<feature type="signal peptide" evidence="2">
    <location>
        <begin position="1"/>
        <end position="22"/>
    </location>
</feature>
<feature type="propeptide" id="PRO_0000315443" evidence="1">
    <location>
        <begin position="23"/>
        <end position="51"/>
    </location>
</feature>
<feature type="peptide" id="PRO_0000315444" description="Conotoxin Pu5.1">
    <location>
        <begin position="52"/>
        <end position="63"/>
    </location>
</feature>
<feature type="modified residue" description="Tryptophan amide" evidence="1">
    <location>
        <position position="63"/>
    </location>
</feature>
<comment type="subcellular location">
    <subcellularLocation>
        <location evidence="1">Secreted</location>
    </subcellularLocation>
</comment>
<comment type="tissue specificity">
    <text>Expressed by the venom duct.</text>
</comment>
<comment type="domain">
    <text>The cysteine framework is V (CC-CC).</text>
</comment>
<comment type="PTM">
    <text evidence="4">Contains 2 disulfide bonds that can be either 'C1-C3, C2-C4' or 'C1-C4, C2-C3', since these disulfide connectivities have been observed for conotoxins with cysteine framework V (for examples, see AC P0DQQ7 and AC P81755).</text>
</comment>
<comment type="similarity">
    <text evidence="4">Belongs to the conotoxin T superfamily.</text>
</comment>
<reference key="1">
    <citation type="journal article" date="2007" name="Peptides">
        <title>Identification of six novel T-1 conotoxins from Conus pulicarius by molecular cloning.</title>
        <authorList>
            <person name="Peng C."/>
            <person name="Wu X."/>
            <person name="Han Y."/>
            <person name="Yuan D."/>
            <person name="Chi C."/>
            <person name="Wang C."/>
        </authorList>
    </citation>
    <scope>NUCLEOTIDE SEQUENCE [MRNA]</scope>
    <source>
        <tissue>Venom duct</tissue>
    </source>
</reference>
<name>CT51_CONPL</name>
<sequence length="67" mass="7396">MRCVPVFVILLLLIASTPSVDARPNPKDDVPLASFHEDANGILQMLWKKGRSCCPSPTSCCPWGKRK</sequence>
<protein>
    <recommendedName>
        <fullName evidence="3">Conotoxin Pu5.1</fullName>
    </recommendedName>
</protein>
<keyword id="KW-0027">Amidation</keyword>
<keyword id="KW-1015">Disulfide bond</keyword>
<keyword id="KW-0964">Secreted</keyword>
<keyword id="KW-0732">Signal</keyword>
<keyword id="KW-0800">Toxin</keyword>
<dbReference type="EMBL" id="EF488463">
    <property type="protein sequence ID" value="ABS01335.1"/>
    <property type="molecule type" value="mRNA"/>
</dbReference>
<dbReference type="ConoServer" id="2789">
    <property type="toxin name" value="Pu5.1 precursor"/>
</dbReference>
<dbReference type="GO" id="GO:0005576">
    <property type="term" value="C:extracellular region"/>
    <property type="evidence" value="ECO:0007669"/>
    <property type="project" value="UniProtKB-SubCell"/>
</dbReference>
<dbReference type="GO" id="GO:0090729">
    <property type="term" value="F:toxin activity"/>
    <property type="evidence" value="ECO:0007669"/>
    <property type="project" value="UniProtKB-KW"/>
</dbReference>
<dbReference type="InterPro" id="IPR031565">
    <property type="entry name" value="T-conotoxin"/>
</dbReference>
<dbReference type="Pfam" id="PF16981">
    <property type="entry name" value="Chi-conotoxin"/>
    <property type="match status" value="1"/>
</dbReference>
<accession>P0C636</accession>
<accession>A8RCQ2</accession>
<proteinExistence type="evidence at transcript level"/>